<keyword id="KW-0479">Metal-binding</keyword>
<keyword id="KW-0520">NAD</keyword>
<keyword id="KW-0560">Oxidoreductase</keyword>
<keyword id="KW-0862">Zinc</keyword>
<evidence type="ECO:0000250" key="1">
    <source>
        <dbReference type="UniProtKB" id="P00327"/>
    </source>
</evidence>
<evidence type="ECO:0000250" key="2">
    <source>
        <dbReference type="UniProtKB" id="P06525"/>
    </source>
</evidence>
<evidence type="ECO:0000269" key="3">
    <source>
    </source>
</evidence>
<evidence type="ECO:0000303" key="4">
    <source>
    </source>
</evidence>
<evidence type="ECO:0000305" key="5"/>
<proteinExistence type="evidence at protein level"/>
<name>WS_STRYX</name>
<accession>P0DXF9</accession>
<comment type="function">
    <text evidence="3">Alcohol dehydrogenase involved in the biosynthesis of curare monoterpene indole alkaloids (MIAs), natural products such as diaboline, a pharmacologically active compound used to regulate blood pressure (PubMed:35794473). Curare alkaloids act as animal glycine receptor antagonists (PubMed:35794473). Catalyzes the conversion of norfluorocurarine to desoxy Wieland-Gumlich aldehyde, and of 18-OH norfluorocurarine to Wieland-Gumlich aldehyde (PubMed:35794473).</text>
</comment>
<comment type="catalytic activity">
    <reaction evidence="3">
        <text>(19E)-cur-19-en-17-al + NADP(+) = norfluorocurarine + NADPH + H(+)</text>
        <dbReference type="Rhea" id="RHEA:80903"/>
        <dbReference type="ChEBI" id="CHEBI:15378"/>
        <dbReference type="ChEBI" id="CHEBI:57783"/>
        <dbReference type="ChEBI" id="CHEBI:58349"/>
        <dbReference type="ChEBI" id="CHEBI:231650"/>
        <dbReference type="ChEBI" id="CHEBI:231653"/>
        <dbReference type="EC" id="1.5.1.57"/>
    </reaction>
    <physiologicalReaction direction="right-to-left" evidence="3">
        <dbReference type="Rhea" id="RHEA:80905"/>
    </physiologicalReaction>
</comment>
<comment type="catalytic activity">
    <reaction evidence="3">
        <text>17,18-epoxy-17-hydroxycur-19-ene + NADP(+) = 18-hydroxynorfluorocurarine + NADPH + H(+)</text>
        <dbReference type="Rhea" id="RHEA:80911"/>
        <dbReference type="ChEBI" id="CHEBI:15378"/>
        <dbReference type="ChEBI" id="CHEBI:57783"/>
        <dbReference type="ChEBI" id="CHEBI:58349"/>
        <dbReference type="ChEBI" id="CHEBI:231652"/>
        <dbReference type="ChEBI" id="CHEBI:231746"/>
        <dbReference type="EC" id="1.5.1.57"/>
    </reaction>
    <physiologicalReaction direction="right-to-left" evidence="3">
        <dbReference type="Rhea" id="RHEA:80913"/>
    </physiologicalReaction>
</comment>
<comment type="cofactor">
    <cofactor evidence="2">
        <name>Zn(2+)</name>
        <dbReference type="ChEBI" id="CHEBI:29105"/>
    </cofactor>
    <text evidence="2">Binds 2 Zn(2+) ions per subunit.</text>
</comment>
<comment type="pathway">
    <text evidence="3">Alkaloid biosynthesis.</text>
</comment>
<comment type="subunit">
    <text evidence="2">Homodimer.</text>
</comment>
<comment type="similarity">
    <text evidence="5">Belongs to the zinc-containing alcohol dehydrogenase family.</text>
</comment>
<sequence>MAGKSQMVEAFGWAARDTSGVLYPFKFLRRATGERDVQFKVLYCGMCDWDMTVLKNGFGTTTYPVVPGHEIVGVVTEVGSKVQKFKVGDTVGVGTLVGSCRTCKKCKHDLEQYCHSYLMADGACYSYGNTICGDMSTRVYGGYSDIMVVDEYFAIVWPAKNYPLAAGAPLLCGGIVAYSAIRYYGLDKPGMHIGIVGLGGIGRMAVKFAKAFGAKVTVISTSINKKQEALEKFGADSFLYSKDPQEMEAAVDTLDAIIDTAPKFHPIVPLINLLKFEGKLILLGAVEESYELPASPLIVERKMVAGSASGGVKEIQEMMDFAAKHNIVAEIEIIPIDYVNTAIGRIEKGDAKDRFVIDIANTLKSGEDINSS</sequence>
<gene>
    <name evidence="4" type="primary">WS</name>
</gene>
<dbReference type="EC" id="1.5.1.57" evidence="3"/>
<dbReference type="EMBL" id="OM304303">
    <property type="protein sequence ID" value="UQZ09634.1"/>
    <property type="molecule type" value="mRNA"/>
</dbReference>
<dbReference type="SMR" id="P0DXF9"/>
<dbReference type="KEGG" id="ag:UQZ09634"/>
<dbReference type="GO" id="GO:0004022">
    <property type="term" value="F:alcohol dehydrogenase (NAD+) activity"/>
    <property type="evidence" value="ECO:0000314"/>
    <property type="project" value="UniProtKB"/>
</dbReference>
<dbReference type="GO" id="GO:0008270">
    <property type="term" value="F:zinc ion binding"/>
    <property type="evidence" value="ECO:0007669"/>
    <property type="project" value="InterPro"/>
</dbReference>
<dbReference type="GO" id="GO:0009821">
    <property type="term" value="P:alkaloid biosynthetic process"/>
    <property type="evidence" value="ECO:0000314"/>
    <property type="project" value="UniProtKB"/>
</dbReference>
<dbReference type="CDD" id="cd05283">
    <property type="entry name" value="CAD1"/>
    <property type="match status" value="1"/>
</dbReference>
<dbReference type="FunFam" id="3.40.50.720:FF:000022">
    <property type="entry name" value="Cinnamyl alcohol dehydrogenase"/>
    <property type="match status" value="1"/>
</dbReference>
<dbReference type="Gene3D" id="3.90.180.10">
    <property type="entry name" value="Medium-chain alcohol dehydrogenases, catalytic domain"/>
    <property type="match status" value="1"/>
</dbReference>
<dbReference type="Gene3D" id="3.40.50.720">
    <property type="entry name" value="NAD(P)-binding Rossmann-like Domain"/>
    <property type="match status" value="1"/>
</dbReference>
<dbReference type="InterPro" id="IPR013149">
    <property type="entry name" value="ADH-like_C"/>
</dbReference>
<dbReference type="InterPro" id="IPR013154">
    <property type="entry name" value="ADH-like_N"/>
</dbReference>
<dbReference type="InterPro" id="IPR002328">
    <property type="entry name" value="ADH_Zn_CS"/>
</dbReference>
<dbReference type="InterPro" id="IPR047109">
    <property type="entry name" value="CAD-like"/>
</dbReference>
<dbReference type="InterPro" id="IPR011032">
    <property type="entry name" value="GroES-like_sf"/>
</dbReference>
<dbReference type="InterPro" id="IPR036291">
    <property type="entry name" value="NAD(P)-bd_dom_sf"/>
</dbReference>
<dbReference type="InterPro" id="IPR020843">
    <property type="entry name" value="PKS_ER"/>
</dbReference>
<dbReference type="PANTHER" id="PTHR42683">
    <property type="entry name" value="ALDEHYDE REDUCTASE"/>
    <property type="match status" value="1"/>
</dbReference>
<dbReference type="Pfam" id="PF08240">
    <property type="entry name" value="ADH_N"/>
    <property type="match status" value="1"/>
</dbReference>
<dbReference type="Pfam" id="PF00107">
    <property type="entry name" value="ADH_zinc_N"/>
    <property type="match status" value="1"/>
</dbReference>
<dbReference type="SMART" id="SM00829">
    <property type="entry name" value="PKS_ER"/>
    <property type="match status" value="1"/>
</dbReference>
<dbReference type="SUPFAM" id="SSF50129">
    <property type="entry name" value="GroES-like"/>
    <property type="match status" value="1"/>
</dbReference>
<dbReference type="SUPFAM" id="SSF51735">
    <property type="entry name" value="NAD(P)-binding Rossmann-fold domains"/>
    <property type="match status" value="1"/>
</dbReference>
<dbReference type="PROSITE" id="PS00059">
    <property type="entry name" value="ADH_ZINC"/>
    <property type="match status" value="1"/>
</dbReference>
<protein>
    <recommendedName>
        <fullName>18-hydroxynorfluorocurarine reductase</fullName>
        <ecNumber evidence="3">1.5.1.57</ecNumber>
    </recommendedName>
    <alternativeName>
        <fullName evidence="4">Wieland-Gumlich aldehyde synthase</fullName>
        <shortName evidence="4">SpWS</shortName>
    </alternativeName>
</protein>
<feature type="chain" id="PRO_0000461123" description="18-hydroxynorfluorocurarine reductase">
    <location>
        <begin position="1"/>
        <end position="372"/>
    </location>
</feature>
<feature type="binding site" evidence="1">
    <location>
        <position position="47"/>
    </location>
    <ligand>
        <name>Zn(2+)</name>
        <dbReference type="ChEBI" id="CHEBI:29105"/>
        <label>1</label>
        <note>catalytic</note>
    </ligand>
</feature>
<feature type="binding site" evidence="2">
    <location>
        <position position="50"/>
    </location>
    <ligand>
        <name>Zn(2+)</name>
        <dbReference type="ChEBI" id="CHEBI:29105"/>
        <label>1</label>
        <note>catalytic</note>
    </ligand>
</feature>
<feature type="binding site" evidence="1">
    <location>
        <position position="69"/>
    </location>
    <ligand>
        <name>Zn(2+)</name>
        <dbReference type="ChEBI" id="CHEBI:29105"/>
        <label>1</label>
        <note>catalytic</note>
    </ligand>
</feature>
<feature type="binding site" evidence="2">
    <location>
        <position position="70"/>
    </location>
    <ligand>
        <name>Zn(2+)</name>
        <dbReference type="ChEBI" id="CHEBI:29105"/>
        <label>1</label>
        <note>catalytic</note>
    </ligand>
</feature>
<feature type="binding site" evidence="1">
    <location>
        <position position="100"/>
    </location>
    <ligand>
        <name>Zn(2+)</name>
        <dbReference type="ChEBI" id="CHEBI:29105"/>
        <label>2</label>
    </ligand>
</feature>
<feature type="binding site" evidence="1">
    <location>
        <position position="103"/>
    </location>
    <ligand>
        <name>Zn(2+)</name>
        <dbReference type="ChEBI" id="CHEBI:29105"/>
        <label>2</label>
    </ligand>
</feature>
<feature type="binding site" evidence="1">
    <location>
        <position position="106"/>
    </location>
    <ligand>
        <name>Zn(2+)</name>
        <dbReference type="ChEBI" id="CHEBI:29105"/>
        <label>2</label>
    </ligand>
</feature>
<feature type="binding site" evidence="1">
    <location>
        <position position="114"/>
    </location>
    <ligand>
        <name>Zn(2+)</name>
        <dbReference type="ChEBI" id="CHEBI:29105"/>
        <label>2</label>
    </ligand>
</feature>
<feature type="binding site" evidence="1">
    <location>
        <position position="172"/>
    </location>
    <ligand>
        <name>Zn(2+)</name>
        <dbReference type="ChEBI" id="CHEBI:29105"/>
        <label>1</label>
        <note>catalytic</note>
    </ligand>
</feature>
<feature type="binding site" evidence="1">
    <location>
        <begin position="197"/>
        <end position="202"/>
    </location>
    <ligand>
        <name>NADP(+)</name>
        <dbReference type="ChEBI" id="CHEBI:58349"/>
    </ligand>
</feature>
<feature type="binding site" evidence="2">
    <location>
        <position position="226"/>
    </location>
    <ligand>
        <name>NADP(+)</name>
        <dbReference type="ChEBI" id="CHEBI:58349"/>
    </ligand>
</feature>
<feature type="binding site" evidence="1">
    <location>
        <begin position="283"/>
        <end position="285"/>
    </location>
    <ligand>
        <name>NADP(+)</name>
        <dbReference type="ChEBI" id="CHEBI:58349"/>
    </ligand>
</feature>
<feature type="binding site" evidence="2">
    <location>
        <position position="307"/>
    </location>
    <ligand>
        <name>NADP(+)</name>
        <dbReference type="ChEBI" id="CHEBI:58349"/>
    </ligand>
</feature>
<feature type="binding site" evidence="2">
    <location>
        <position position="354"/>
    </location>
    <ligand>
        <name>NADP(+)</name>
        <dbReference type="ChEBI" id="CHEBI:58349"/>
    </ligand>
</feature>
<organism>
    <name type="scientific">Strychnos sp</name>
    <dbReference type="NCBI Taxonomy" id="2946199"/>
    <lineage>
        <taxon>Eukaryota</taxon>
        <taxon>Viridiplantae</taxon>
        <taxon>Streptophyta</taxon>
        <taxon>Embryophyta</taxon>
        <taxon>Tracheophyta</taxon>
        <taxon>Spermatophyta</taxon>
        <taxon>Magnoliopsida</taxon>
        <taxon>eudicotyledons</taxon>
        <taxon>Gunneridae</taxon>
        <taxon>Pentapetalae</taxon>
        <taxon>asterids</taxon>
        <taxon>lamiids</taxon>
        <taxon>Gentianales</taxon>
        <taxon>Loganiaceae</taxon>
        <taxon>Strychnos</taxon>
    </lineage>
</organism>
<reference key="1">
    <citation type="journal article" date="2022" name="Nature">
        <title>Biosynthesis of strychnine.</title>
        <authorList>
            <person name="Hong B."/>
            <person name="Grzech D."/>
            <person name="Caputi L."/>
            <person name="Sonawane P."/>
            <person name="Lopez C.E.R."/>
            <person name="Kamileen M.O."/>
            <person name="Hernandez Lozada N.J."/>
            <person name="Grabe V."/>
            <person name="O'Connor S.E."/>
        </authorList>
    </citation>
    <scope>NUCLEOTIDE SEQUENCE [MRNA]</scope>
    <scope>FUNCTION</scope>
    <scope>CATALYTIC ACTIVITY</scope>
    <scope>PATHWAY</scope>
</reference>